<comment type="catalytic activity">
    <reaction evidence="1">
        <text>L-citrulline + L-aspartate + ATP = 2-(N(omega)-L-arginino)succinate + AMP + diphosphate + H(+)</text>
        <dbReference type="Rhea" id="RHEA:10932"/>
        <dbReference type="ChEBI" id="CHEBI:15378"/>
        <dbReference type="ChEBI" id="CHEBI:29991"/>
        <dbReference type="ChEBI" id="CHEBI:30616"/>
        <dbReference type="ChEBI" id="CHEBI:33019"/>
        <dbReference type="ChEBI" id="CHEBI:57472"/>
        <dbReference type="ChEBI" id="CHEBI:57743"/>
        <dbReference type="ChEBI" id="CHEBI:456215"/>
        <dbReference type="EC" id="6.3.4.5"/>
    </reaction>
</comment>
<comment type="pathway">
    <text evidence="1">Amino-acid biosynthesis; L-arginine biosynthesis; L-arginine from L-ornithine and carbamoyl phosphate: step 2/3.</text>
</comment>
<comment type="subunit">
    <text evidence="1">Homotetramer.</text>
</comment>
<comment type="subcellular location">
    <subcellularLocation>
        <location evidence="1">Cytoplasm</location>
    </subcellularLocation>
</comment>
<comment type="similarity">
    <text evidence="1">Belongs to the argininosuccinate synthase family. Type 1 subfamily.</text>
</comment>
<proteinExistence type="inferred from homology"/>
<organism>
    <name type="scientific">Cereibacter sphaeroides (strain KD131 / KCTC 12085)</name>
    <name type="common">Rhodobacter sphaeroides</name>
    <dbReference type="NCBI Taxonomy" id="557760"/>
    <lineage>
        <taxon>Bacteria</taxon>
        <taxon>Pseudomonadati</taxon>
        <taxon>Pseudomonadota</taxon>
        <taxon>Alphaproteobacteria</taxon>
        <taxon>Rhodobacterales</taxon>
        <taxon>Paracoccaceae</taxon>
        <taxon>Cereibacter</taxon>
    </lineage>
</organism>
<feature type="chain" id="PRO_1000116290" description="Argininosuccinate synthase">
    <location>
        <begin position="1"/>
        <end position="408"/>
    </location>
</feature>
<feature type="binding site" evidence="1">
    <location>
        <begin position="10"/>
        <end position="18"/>
    </location>
    <ligand>
        <name>ATP</name>
        <dbReference type="ChEBI" id="CHEBI:30616"/>
    </ligand>
</feature>
<feature type="binding site" evidence="1">
    <location>
        <position position="37"/>
    </location>
    <ligand>
        <name>ATP</name>
        <dbReference type="ChEBI" id="CHEBI:30616"/>
    </ligand>
</feature>
<feature type="binding site" evidence="1">
    <location>
        <position position="90"/>
    </location>
    <ligand>
        <name>L-citrulline</name>
        <dbReference type="ChEBI" id="CHEBI:57743"/>
    </ligand>
</feature>
<feature type="binding site" evidence="1">
    <location>
        <position position="95"/>
    </location>
    <ligand>
        <name>L-citrulline</name>
        <dbReference type="ChEBI" id="CHEBI:57743"/>
    </ligand>
</feature>
<feature type="binding site" evidence="1">
    <location>
        <position position="120"/>
    </location>
    <ligand>
        <name>ATP</name>
        <dbReference type="ChEBI" id="CHEBI:30616"/>
    </ligand>
</feature>
<feature type="binding site" evidence="1">
    <location>
        <position position="122"/>
    </location>
    <ligand>
        <name>L-aspartate</name>
        <dbReference type="ChEBI" id="CHEBI:29991"/>
    </ligand>
</feature>
<feature type="binding site" evidence="1">
    <location>
        <position position="126"/>
    </location>
    <ligand>
        <name>L-aspartate</name>
        <dbReference type="ChEBI" id="CHEBI:29991"/>
    </ligand>
</feature>
<feature type="binding site" evidence="1">
    <location>
        <position position="126"/>
    </location>
    <ligand>
        <name>L-citrulline</name>
        <dbReference type="ChEBI" id="CHEBI:57743"/>
    </ligand>
</feature>
<feature type="binding site" evidence="1">
    <location>
        <position position="127"/>
    </location>
    <ligand>
        <name>L-aspartate</name>
        <dbReference type="ChEBI" id="CHEBI:29991"/>
    </ligand>
</feature>
<feature type="binding site" evidence="1">
    <location>
        <position position="130"/>
    </location>
    <ligand>
        <name>L-citrulline</name>
        <dbReference type="ChEBI" id="CHEBI:57743"/>
    </ligand>
</feature>
<feature type="binding site" evidence="1">
    <location>
        <position position="181"/>
    </location>
    <ligand>
        <name>L-citrulline</name>
        <dbReference type="ChEBI" id="CHEBI:57743"/>
    </ligand>
</feature>
<feature type="binding site" evidence="1">
    <location>
        <position position="190"/>
    </location>
    <ligand>
        <name>L-citrulline</name>
        <dbReference type="ChEBI" id="CHEBI:57743"/>
    </ligand>
</feature>
<feature type="binding site" evidence="1">
    <location>
        <position position="266"/>
    </location>
    <ligand>
        <name>L-citrulline</name>
        <dbReference type="ChEBI" id="CHEBI:57743"/>
    </ligand>
</feature>
<feature type="binding site" evidence="1">
    <location>
        <position position="278"/>
    </location>
    <ligand>
        <name>L-citrulline</name>
        <dbReference type="ChEBI" id="CHEBI:57743"/>
    </ligand>
</feature>
<reference key="1">
    <citation type="journal article" date="2009" name="J. Bacteriol.">
        <title>Complete genome sequence of Rhodobacter sphaeroides KD131.</title>
        <authorList>
            <person name="Lim S.-K."/>
            <person name="Kim S.J."/>
            <person name="Cha S.H."/>
            <person name="Oh Y.-K."/>
            <person name="Rhee H.-J."/>
            <person name="Kim M.-S."/>
            <person name="Lee J.K."/>
        </authorList>
    </citation>
    <scope>NUCLEOTIDE SEQUENCE [LARGE SCALE GENOMIC DNA]</scope>
    <source>
        <strain>KD131 / KCTC 12085</strain>
    </source>
</reference>
<name>ASSY_CERSK</name>
<gene>
    <name evidence="1" type="primary">argG</name>
    <name type="ordered locus">RSKD131_2610</name>
</gene>
<accession>B9KPT5</accession>
<sequence length="408" mass="45244">MSAPKKVVLAYSGGLDTSIILKWLQTEYGCEVVTFTADLGQGEELEPAREKAVMLGIKPENIFIEDVREEFVRDFVFPMFRANALYEGLYLLGTSIARPLIAKRLVEIAAQTGADAVAHGATGKGNDQVRFELTAYALDPAIKVIAPWREWDLTSRTKLLEFAEQNQIPIAKNKRGEAPFSVDANLLHTSSEGRVLENPGEEAPDYVYQRTVDPEKAPDAPEFVEIAFEKGDAVAINGEAMSPATILTKLNELGGKHGVGRLDLVENRFVGMKSRGIYETPGGTILLEAHRGIEQITLDSGAGHLKDSIMPRYAELIYNGFWYSPEREMLQALIDKSQEHVTGTVRVKLYKGFARTVARWSEHSLYSEKHVTFEEDAGAYDQKDAAGFIRLNALRLKLIATRNARVKG</sequence>
<keyword id="KW-0028">Amino-acid biosynthesis</keyword>
<keyword id="KW-0055">Arginine biosynthesis</keyword>
<keyword id="KW-0067">ATP-binding</keyword>
<keyword id="KW-0963">Cytoplasm</keyword>
<keyword id="KW-0436">Ligase</keyword>
<keyword id="KW-0547">Nucleotide-binding</keyword>
<dbReference type="EC" id="6.3.4.5" evidence="1"/>
<dbReference type="EMBL" id="CP001150">
    <property type="protein sequence ID" value="ACM02470.1"/>
    <property type="molecule type" value="Genomic_DNA"/>
</dbReference>
<dbReference type="RefSeq" id="WP_002721701.1">
    <property type="nucleotide sequence ID" value="NC_011963.1"/>
</dbReference>
<dbReference type="SMR" id="B9KPT5"/>
<dbReference type="GeneID" id="67447984"/>
<dbReference type="KEGG" id="rsk:RSKD131_2610"/>
<dbReference type="HOGENOM" id="CLU_032784_4_2_5"/>
<dbReference type="UniPathway" id="UPA00068">
    <property type="reaction ID" value="UER00113"/>
</dbReference>
<dbReference type="GO" id="GO:0005737">
    <property type="term" value="C:cytoplasm"/>
    <property type="evidence" value="ECO:0007669"/>
    <property type="project" value="UniProtKB-SubCell"/>
</dbReference>
<dbReference type="GO" id="GO:0004055">
    <property type="term" value="F:argininosuccinate synthase activity"/>
    <property type="evidence" value="ECO:0007669"/>
    <property type="project" value="UniProtKB-UniRule"/>
</dbReference>
<dbReference type="GO" id="GO:0005524">
    <property type="term" value="F:ATP binding"/>
    <property type="evidence" value="ECO:0007669"/>
    <property type="project" value="UniProtKB-UniRule"/>
</dbReference>
<dbReference type="GO" id="GO:0000053">
    <property type="term" value="P:argininosuccinate metabolic process"/>
    <property type="evidence" value="ECO:0007669"/>
    <property type="project" value="TreeGrafter"/>
</dbReference>
<dbReference type="GO" id="GO:0006526">
    <property type="term" value="P:L-arginine biosynthetic process"/>
    <property type="evidence" value="ECO:0007669"/>
    <property type="project" value="UniProtKB-UniRule"/>
</dbReference>
<dbReference type="GO" id="GO:0000050">
    <property type="term" value="P:urea cycle"/>
    <property type="evidence" value="ECO:0007669"/>
    <property type="project" value="TreeGrafter"/>
</dbReference>
<dbReference type="CDD" id="cd01999">
    <property type="entry name" value="ASS"/>
    <property type="match status" value="1"/>
</dbReference>
<dbReference type="FunFam" id="3.40.50.620:FF:000019">
    <property type="entry name" value="Argininosuccinate synthase"/>
    <property type="match status" value="1"/>
</dbReference>
<dbReference type="FunFam" id="3.90.1260.10:FF:000007">
    <property type="entry name" value="Argininosuccinate synthase"/>
    <property type="match status" value="1"/>
</dbReference>
<dbReference type="Gene3D" id="3.90.1260.10">
    <property type="entry name" value="Argininosuccinate synthetase, chain A, domain 2"/>
    <property type="match status" value="1"/>
</dbReference>
<dbReference type="Gene3D" id="3.40.50.620">
    <property type="entry name" value="HUPs"/>
    <property type="match status" value="1"/>
</dbReference>
<dbReference type="Gene3D" id="1.20.5.470">
    <property type="entry name" value="Single helix bin"/>
    <property type="match status" value="1"/>
</dbReference>
<dbReference type="HAMAP" id="MF_00005">
    <property type="entry name" value="Arg_succ_synth_type1"/>
    <property type="match status" value="1"/>
</dbReference>
<dbReference type="InterPro" id="IPR048268">
    <property type="entry name" value="Arginosuc_syn_C"/>
</dbReference>
<dbReference type="InterPro" id="IPR048267">
    <property type="entry name" value="Arginosuc_syn_N"/>
</dbReference>
<dbReference type="InterPro" id="IPR001518">
    <property type="entry name" value="Arginosuc_synth"/>
</dbReference>
<dbReference type="InterPro" id="IPR018223">
    <property type="entry name" value="Arginosuc_synth_CS"/>
</dbReference>
<dbReference type="InterPro" id="IPR023434">
    <property type="entry name" value="Arginosuc_synth_type_1_subfam"/>
</dbReference>
<dbReference type="InterPro" id="IPR024074">
    <property type="entry name" value="AS_cat/multimer_dom_body"/>
</dbReference>
<dbReference type="InterPro" id="IPR014729">
    <property type="entry name" value="Rossmann-like_a/b/a_fold"/>
</dbReference>
<dbReference type="NCBIfam" id="TIGR00032">
    <property type="entry name" value="argG"/>
    <property type="match status" value="1"/>
</dbReference>
<dbReference type="NCBIfam" id="NF001770">
    <property type="entry name" value="PRK00509.1"/>
    <property type="match status" value="1"/>
</dbReference>
<dbReference type="PANTHER" id="PTHR11587">
    <property type="entry name" value="ARGININOSUCCINATE SYNTHASE"/>
    <property type="match status" value="1"/>
</dbReference>
<dbReference type="PANTHER" id="PTHR11587:SF2">
    <property type="entry name" value="ARGININOSUCCINATE SYNTHASE"/>
    <property type="match status" value="1"/>
</dbReference>
<dbReference type="Pfam" id="PF20979">
    <property type="entry name" value="Arginosuc_syn_C"/>
    <property type="match status" value="1"/>
</dbReference>
<dbReference type="Pfam" id="PF00764">
    <property type="entry name" value="Arginosuc_synth"/>
    <property type="match status" value="1"/>
</dbReference>
<dbReference type="SUPFAM" id="SSF52402">
    <property type="entry name" value="Adenine nucleotide alpha hydrolases-like"/>
    <property type="match status" value="1"/>
</dbReference>
<dbReference type="SUPFAM" id="SSF69864">
    <property type="entry name" value="Argininosuccinate synthetase, C-terminal domain"/>
    <property type="match status" value="1"/>
</dbReference>
<dbReference type="PROSITE" id="PS00564">
    <property type="entry name" value="ARGININOSUCCIN_SYN_1"/>
    <property type="match status" value="1"/>
</dbReference>
<dbReference type="PROSITE" id="PS00565">
    <property type="entry name" value="ARGININOSUCCIN_SYN_2"/>
    <property type="match status" value="1"/>
</dbReference>
<protein>
    <recommendedName>
        <fullName evidence="1">Argininosuccinate synthase</fullName>
        <ecNumber evidence="1">6.3.4.5</ecNumber>
    </recommendedName>
    <alternativeName>
        <fullName evidence="1">Citrulline--aspartate ligase</fullName>
    </alternativeName>
</protein>
<evidence type="ECO:0000255" key="1">
    <source>
        <dbReference type="HAMAP-Rule" id="MF_00005"/>
    </source>
</evidence>